<protein>
    <recommendedName>
        <fullName>Chromatin modification-related protein EAF1</fullName>
    </recommendedName>
    <alternativeName>
        <fullName>ESA1-associated factor 1</fullName>
    </alternativeName>
    <alternativeName>
        <fullName>Vacuolar import and degradation protein 21</fullName>
    </alternativeName>
</protein>
<keyword id="KW-0010">Activator</keyword>
<keyword id="KW-0156">Chromatin regulator</keyword>
<keyword id="KW-0227">DNA damage</keyword>
<keyword id="KW-0234">DNA repair</keyword>
<keyword id="KW-0539">Nucleus</keyword>
<keyword id="KW-1185">Reference proteome</keyword>
<keyword id="KW-0804">Transcription</keyword>
<keyword id="KW-0805">Transcription regulation</keyword>
<proteinExistence type="inferred from homology"/>
<gene>
    <name type="primary">EAF1</name>
    <name type="synonym">VID21</name>
    <name type="ordered locus">KLLA0E21538g</name>
</gene>
<evidence type="ECO:0000250" key="1"/>
<evidence type="ECO:0000255" key="2">
    <source>
        <dbReference type="PROSITE-ProRule" id="PRU00133"/>
    </source>
</evidence>
<evidence type="ECO:0000255" key="3">
    <source>
        <dbReference type="PROSITE-ProRule" id="PRU00549"/>
    </source>
</evidence>
<evidence type="ECO:0000256" key="4">
    <source>
        <dbReference type="SAM" id="MobiDB-lite"/>
    </source>
</evidence>
<evidence type="ECO:0000305" key="5"/>
<reference key="1">
    <citation type="journal article" date="2004" name="Nature">
        <title>Genome evolution in yeasts.</title>
        <authorList>
            <person name="Dujon B."/>
            <person name="Sherman D."/>
            <person name="Fischer G."/>
            <person name="Durrens P."/>
            <person name="Casaregola S."/>
            <person name="Lafontaine I."/>
            <person name="de Montigny J."/>
            <person name="Marck C."/>
            <person name="Neuveglise C."/>
            <person name="Talla E."/>
            <person name="Goffard N."/>
            <person name="Frangeul L."/>
            <person name="Aigle M."/>
            <person name="Anthouard V."/>
            <person name="Babour A."/>
            <person name="Barbe V."/>
            <person name="Barnay S."/>
            <person name="Blanchin S."/>
            <person name="Beckerich J.-M."/>
            <person name="Beyne E."/>
            <person name="Bleykasten C."/>
            <person name="Boisrame A."/>
            <person name="Boyer J."/>
            <person name="Cattolico L."/>
            <person name="Confanioleri F."/>
            <person name="de Daruvar A."/>
            <person name="Despons L."/>
            <person name="Fabre E."/>
            <person name="Fairhead C."/>
            <person name="Ferry-Dumazet H."/>
            <person name="Groppi A."/>
            <person name="Hantraye F."/>
            <person name="Hennequin C."/>
            <person name="Jauniaux N."/>
            <person name="Joyet P."/>
            <person name="Kachouri R."/>
            <person name="Kerrest A."/>
            <person name="Koszul R."/>
            <person name="Lemaire M."/>
            <person name="Lesur I."/>
            <person name="Ma L."/>
            <person name="Muller H."/>
            <person name="Nicaud J.-M."/>
            <person name="Nikolski M."/>
            <person name="Oztas S."/>
            <person name="Ozier-Kalogeropoulos O."/>
            <person name="Pellenz S."/>
            <person name="Potier S."/>
            <person name="Richard G.-F."/>
            <person name="Straub M.-L."/>
            <person name="Suleau A."/>
            <person name="Swennen D."/>
            <person name="Tekaia F."/>
            <person name="Wesolowski-Louvel M."/>
            <person name="Westhof E."/>
            <person name="Wirth B."/>
            <person name="Zeniou-Meyer M."/>
            <person name="Zivanovic Y."/>
            <person name="Bolotin-Fukuhara M."/>
            <person name="Thierry A."/>
            <person name="Bouchier C."/>
            <person name="Caudron B."/>
            <person name="Scarpelli C."/>
            <person name="Gaillardin C."/>
            <person name="Weissenbach J."/>
            <person name="Wincker P."/>
            <person name="Souciet J.-L."/>
        </authorList>
    </citation>
    <scope>NUCLEOTIDE SEQUENCE [LARGE SCALE GENOMIC DNA]</scope>
    <source>
        <strain>ATCC 8585 / CBS 2359 / DSM 70799 / NBRC 1267 / NRRL Y-1140 / WM37</strain>
    </source>
</reference>
<organism>
    <name type="scientific">Kluyveromyces lactis (strain ATCC 8585 / CBS 2359 / DSM 70799 / NBRC 1267 / NRRL Y-1140 / WM37)</name>
    <name type="common">Yeast</name>
    <name type="synonym">Candida sphaerica</name>
    <dbReference type="NCBI Taxonomy" id="284590"/>
    <lineage>
        <taxon>Eukaryota</taxon>
        <taxon>Fungi</taxon>
        <taxon>Dikarya</taxon>
        <taxon>Ascomycota</taxon>
        <taxon>Saccharomycotina</taxon>
        <taxon>Saccharomycetes</taxon>
        <taxon>Saccharomycetales</taxon>
        <taxon>Saccharomycetaceae</taxon>
        <taxon>Kluyveromyces</taxon>
    </lineage>
</organism>
<name>EAF1_KLULA</name>
<comment type="function">
    <text evidence="1">Component of the NuA4 histone acetyltransferase complex which is involved in transcriptional activation of selected genes principally by acetylation of nucleosomal histone H4 and H2A. The NuA4 complex is also involved in DNA repair (By similarity).</text>
</comment>
<comment type="subunit">
    <text evidence="1">Component of the NuA4 histone acetyltransferase complex.</text>
</comment>
<comment type="subcellular location">
    <subcellularLocation>
        <location evidence="5">Nucleus</location>
    </subcellularLocation>
</comment>
<comment type="similarity">
    <text evidence="5">Belongs to the EAF1 family.</text>
</comment>
<dbReference type="EMBL" id="CR382125">
    <property type="protein sequence ID" value="CAH00008.1"/>
    <property type="molecule type" value="Genomic_DNA"/>
</dbReference>
<dbReference type="RefSeq" id="XP_454921.1">
    <property type="nucleotide sequence ID" value="XM_454921.1"/>
</dbReference>
<dbReference type="SMR" id="Q6CMB8"/>
<dbReference type="FunCoup" id="Q6CMB8">
    <property type="interactions" value="304"/>
</dbReference>
<dbReference type="STRING" id="284590.Q6CMB8"/>
<dbReference type="PaxDb" id="284590-Q6CMB8"/>
<dbReference type="KEGG" id="kla:KLLA0_E21451g"/>
<dbReference type="eggNOG" id="ENOG502QSEY">
    <property type="taxonomic scope" value="Eukaryota"/>
</dbReference>
<dbReference type="HOGENOM" id="CLU_004795_0_0_1"/>
<dbReference type="InParanoid" id="Q6CMB8"/>
<dbReference type="OMA" id="DEMQWMS"/>
<dbReference type="Proteomes" id="UP000000598">
    <property type="component" value="Chromosome E"/>
</dbReference>
<dbReference type="GO" id="GO:0035267">
    <property type="term" value="C:NuA4 histone acetyltransferase complex"/>
    <property type="evidence" value="ECO:0007669"/>
    <property type="project" value="TreeGrafter"/>
</dbReference>
<dbReference type="GO" id="GO:0005634">
    <property type="term" value="C:nucleus"/>
    <property type="evidence" value="ECO:0007669"/>
    <property type="project" value="UniProtKB-SubCell"/>
</dbReference>
<dbReference type="GO" id="GO:0003682">
    <property type="term" value="F:chromatin binding"/>
    <property type="evidence" value="ECO:0007669"/>
    <property type="project" value="TreeGrafter"/>
</dbReference>
<dbReference type="GO" id="GO:0006325">
    <property type="term" value="P:chromatin organization"/>
    <property type="evidence" value="ECO:0007669"/>
    <property type="project" value="UniProtKB-KW"/>
</dbReference>
<dbReference type="GO" id="GO:0006281">
    <property type="term" value="P:DNA repair"/>
    <property type="evidence" value="ECO:0007669"/>
    <property type="project" value="UniProtKB-KW"/>
</dbReference>
<dbReference type="CDD" id="cd00167">
    <property type="entry name" value="SANT"/>
    <property type="match status" value="1"/>
</dbReference>
<dbReference type="FunFam" id="1.10.10.60:FF:000484">
    <property type="entry name" value="Chromatin modification-related protein EAF1"/>
    <property type="match status" value="1"/>
</dbReference>
<dbReference type="Gene3D" id="1.10.10.60">
    <property type="entry name" value="Homeodomain-like"/>
    <property type="match status" value="1"/>
</dbReference>
<dbReference type="InterPro" id="IPR009057">
    <property type="entry name" value="Homeodomain-like_sf"/>
</dbReference>
<dbReference type="InterPro" id="IPR014012">
    <property type="entry name" value="HSA_dom"/>
</dbReference>
<dbReference type="InterPro" id="IPR001005">
    <property type="entry name" value="SANT/Myb"/>
</dbReference>
<dbReference type="PANTHER" id="PTHR46459:SF1">
    <property type="entry name" value="E1A-BINDING PROTEIN P400"/>
    <property type="match status" value="1"/>
</dbReference>
<dbReference type="PANTHER" id="PTHR46459">
    <property type="entry name" value="E1A-BINDING PROTEIN P400-RELATED"/>
    <property type="match status" value="1"/>
</dbReference>
<dbReference type="Pfam" id="PF07529">
    <property type="entry name" value="HSA"/>
    <property type="match status" value="1"/>
</dbReference>
<dbReference type="Pfam" id="PF13921">
    <property type="entry name" value="Myb_DNA-bind_6"/>
    <property type="match status" value="1"/>
</dbReference>
<dbReference type="SMART" id="SM00717">
    <property type="entry name" value="SANT"/>
    <property type="match status" value="1"/>
</dbReference>
<dbReference type="SUPFAM" id="SSF46689">
    <property type="entry name" value="Homeodomain-like"/>
    <property type="match status" value="1"/>
</dbReference>
<dbReference type="PROSITE" id="PS51204">
    <property type="entry name" value="HSA"/>
    <property type="match status" value="1"/>
</dbReference>
<dbReference type="PROSITE" id="PS50090">
    <property type="entry name" value="MYB_LIKE"/>
    <property type="match status" value="1"/>
</dbReference>
<feature type="chain" id="PRO_0000065820" description="Chromatin modification-related protein EAF1">
    <location>
        <begin position="1"/>
        <end position="1005"/>
    </location>
</feature>
<feature type="domain" description="HSA" evidence="3">
    <location>
        <begin position="386"/>
        <end position="460"/>
    </location>
</feature>
<feature type="domain" description="Myb-like" evidence="2">
    <location>
        <begin position="684"/>
        <end position="744"/>
    </location>
</feature>
<feature type="region of interest" description="Disordered" evidence="4">
    <location>
        <begin position="72"/>
        <end position="180"/>
    </location>
</feature>
<feature type="region of interest" description="Disordered" evidence="4">
    <location>
        <begin position="193"/>
        <end position="214"/>
    </location>
</feature>
<feature type="region of interest" description="Disordered" evidence="4">
    <location>
        <begin position="222"/>
        <end position="241"/>
    </location>
</feature>
<feature type="region of interest" description="Disordered" evidence="4">
    <location>
        <begin position="468"/>
        <end position="543"/>
    </location>
</feature>
<feature type="region of interest" description="Disordered" evidence="4">
    <location>
        <begin position="807"/>
        <end position="844"/>
    </location>
</feature>
<feature type="region of interest" description="Disordered" evidence="4">
    <location>
        <begin position="874"/>
        <end position="930"/>
    </location>
</feature>
<feature type="region of interest" description="Disordered" evidence="4">
    <location>
        <begin position="981"/>
        <end position="1005"/>
    </location>
</feature>
<feature type="compositionally biased region" description="Basic and acidic residues" evidence="4">
    <location>
        <begin position="75"/>
        <end position="85"/>
    </location>
</feature>
<feature type="compositionally biased region" description="Low complexity" evidence="4">
    <location>
        <begin position="126"/>
        <end position="170"/>
    </location>
</feature>
<feature type="compositionally biased region" description="Polar residues" evidence="4">
    <location>
        <begin position="171"/>
        <end position="180"/>
    </location>
</feature>
<feature type="compositionally biased region" description="Polar residues" evidence="4">
    <location>
        <begin position="198"/>
        <end position="209"/>
    </location>
</feature>
<feature type="compositionally biased region" description="Polar residues" evidence="4">
    <location>
        <begin position="481"/>
        <end position="490"/>
    </location>
</feature>
<feature type="compositionally biased region" description="Basic and acidic residues" evidence="4">
    <location>
        <begin position="519"/>
        <end position="539"/>
    </location>
</feature>
<feature type="compositionally biased region" description="Polar residues" evidence="4">
    <location>
        <begin position="874"/>
        <end position="890"/>
    </location>
</feature>
<feature type="compositionally biased region" description="Polar residues" evidence="4">
    <location>
        <begin position="915"/>
        <end position="926"/>
    </location>
</feature>
<sequence length="1005" mass="114703">MSSASKGNATGSKSPEQLLEERRHLLVQLYCISQITELKNVENHERIGKEIEKFLDQHTLIKDKPIDINALPKFRPRDVSSDRKLNNRSKSSSPSEVKRELKKQRSKDVSPSGSEEHDVDTQTLPQSQTRVVPRVQSQQSIQQSSRQSMVQAQSSRQLQQQQLQKQRSVSPTQKLPITHNNVPPVVVQAHMEPKSVQYPETQSKPSTSGKRLLDEEQQDISENQISKRQRLDSGNLSNSTAARNAATMEIPPHPYSQMIDISQLHADPTPIGVKEPQPYIIESIINNVSKEERKTFFEDDINVKEAVYMITKENAPTKLAKGMPIQEIKYLSQTLPLLRLIPQSQKALTTDLINTALNERRITVVASRIEELRRLNLWSLRQPRKFIDPVTASQPVTHHNVLIEEAKWMREDFRESLNYKIAMCTQMAQAVMEFWTYGKVCCINCKSIPPPSKDIEDIASSQDMGTKISTVEPEQKDKESNTSPDQSNDDGSSKIAEDVEMSEDGVKSSTGLTDGSEAVEEKSENGIKEGDKETDKNSSEEPTIDIQKLLKRVNPKDEIVAPSLPVTSMEVYLAKKSSSPFRNYIDIKELSTLGAAISNSLPLYGLLDEKNLDSSRPLPFEPVSKAISPLDEDHFMKLVEKQFVDEEPSLVPLSKRRGMFYGNRRSHYLRPPNAPSLRYLKFRTPTIWLPEDDQELVKNINQYAYNWDLISSQMSNHHKREYVSNIERRTPWQCFERFVQLNEKFNIADMKGPKAHNAQIWLYEAHKLQQQQKRRISPLGVGSESIQRGHRRLRWASMFEAMRKCIKKRENAPRPNPSQPRKPFDVKNMSVPTPQEMSDLKAQRDEALRRDMQIKRAAKQRMQMAQLQQGKLPLTTASSPNLPMANNPNSKDSRIRSKQSTPQSAPPLGEKEKVTTQTPTQRNTKPANKREIIEGYAKKILFQKPNFTPELALMAAENIYRSLPLSDQQRKTVIYDNVAQPKVRPPEMKHSSPTPQEILQRAQKK</sequence>
<accession>Q6CMB8</accession>